<name>OTC_BURL3</name>
<sequence>MTAKTIRHYLQFTDFSLEDYEYVLERTGILKRKFKNYETYHPLHDRTLAMIFEKSSTRTRLSFEAGIFQLGGHAVFMSTRDTQLGRGEPVEDSAQVISRMVDIIMIRTFEQEVIKRFADNSRVPVINGLTNEYHPCQVLADIFTYYEHRGPIAGKTVAWVGDANNMLYTWIEAAQILGFKLRLSTPPGYALDMKLVSPDSAPFYEVFEDPNEACKGADLVTTDVWTSMGFEAENEARMQAFADWCVDEEMMGHANPDALFMHCLPAHRGEEVTAGVIDGPQSVVWDEAENRLHVQKALMEFLLLGRLKH</sequence>
<feature type="chain" id="PRO_1000065081" description="Ornithine carbamoyltransferase">
    <location>
        <begin position="1"/>
        <end position="309"/>
    </location>
</feature>
<feature type="binding site" evidence="2">
    <location>
        <begin position="56"/>
        <end position="59"/>
    </location>
    <ligand>
        <name>carbamoyl phosphate</name>
        <dbReference type="ChEBI" id="CHEBI:58228"/>
    </ligand>
</feature>
<feature type="binding site" evidence="2">
    <location>
        <position position="83"/>
    </location>
    <ligand>
        <name>carbamoyl phosphate</name>
        <dbReference type="ChEBI" id="CHEBI:58228"/>
    </ligand>
</feature>
<feature type="binding site" evidence="2">
    <location>
        <position position="107"/>
    </location>
    <ligand>
        <name>carbamoyl phosphate</name>
        <dbReference type="ChEBI" id="CHEBI:58228"/>
    </ligand>
</feature>
<feature type="binding site" evidence="2">
    <location>
        <begin position="134"/>
        <end position="137"/>
    </location>
    <ligand>
        <name>carbamoyl phosphate</name>
        <dbReference type="ChEBI" id="CHEBI:58228"/>
    </ligand>
</feature>
<feature type="binding site" evidence="2">
    <location>
        <position position="165"/>
    </location>
    <ligand>
        <name>L-ornithine</name>
        <dbReference type="ChEBI" id="CHEBI:46911"/>
    </ligand>
</feature>
<feature type="binding site" evidence="2">
    <location>
        <position position="223"/>
    </location>
    <ligand>
        <name>L-ornithine</name>
        <dbReference type="ChEBI" id="CHEBI:46911"/>
    </ligand>
</feature>
<feature type="binding site" evidence="2">
    <location>
        <begin position="227"/>
        <end position="228"/>
    </location>
    <ligand>
        <name>L-ornithine</name>
        <dbReference type="ChEBI" id="CHEBI:46911"/>
    </ligand>
</feature>
<feature type="binding site" evidence="2">
    <location>
        <begin position="263"/>
        <end position="264"/>
    </location>
    <ligand>
        <name>carbamoyl phosphate</name>
        <dbReference type="ChEBI" id="CHEBI:58228"/>
    </ligand>
</feature>
<feature type="binding site" evidence="2">
    <location>
        <position position="291"/>
    </location>
    <ligand>
        <name>carbamoyl phosphate</name>
        <dbReference type="ChEBI" id="CHEBI:58228"/>
    </ligand>
</feature>
<protein>
    <recommendedName>
        <fullName evidence="2">Ornithine carbamoyltransferase</fullName>
        <shortName evidence="2">OTCase</shortName>
        <ecNumber evidence="2">2.1.3.3</ecNumber>
    </recommendedName>
</protein>
<gene>
    <name evidence="2" type="primary">argF</name>
    <name type="ordered locus">Bcep18194_A5885</name>
</gene>
<keyword id="KW-0028">Amino-acid biosynthesis</keyword>
<keyword id="KW-0055">Arginine biosynthesis</keyword>
<keyword id="KW-0963">Cytoplasm</keyword>
<keyword id="KW-0808">Transferase</keyword>
<evidence type="ECO:0000250" key="1"/>
<evidence type="ECO:0000255" key="2">
    <source>
        <dbReference type="HAMAP-Rule" id="MF_01109"/>
    </source>
</evidence>
<reference key="1">
    <citation type="submission" date="2005-10" db="EMBL/GenBank/DDBJ databases">
        <title>Complete sequence of chromosome 1 of Burkholderia sp. 383.</title>
        <authorList>
            <consortium name="US DOE Joint Genome Institute"/>
            <person name="Copeland A."/>
            <person name="Lucas S."/>
            <person name="Lapidus A."/>
            <person name="Barry K."/>
            <person name="Detter J.C."/>
            <person name="Glavina T."/>
            <person name="Hammon N."/>
            <person name="Israni S."/>
            <person name="Pitluck S."/>
            <person name="Chain P."/>
            <person name="Malfatti S."/>
            <person name="Shin M."/>
            <person name="Vergez L."/>
            <person name="Schmutz J."/>
            <person name="Larimer F."/>
            <person name="Land M."/>
            <person name="Kyrpides N."/>
            <person name="Lykidis A."/>
            <person name="Richardson P."/>
        </authorList>
    </citation>
    <scope>NUCLEOTIDE SEQUENCE [LARGE SCALE GENOMIC DNA]</scope>
    <source>
        <strain>ATCC 17760 / DSM 23089 / LMG 22485 / NCIMB 9086 / R18194 / 383</strain>
    </source>
</reference>
<dbReference type="EC" id="2.1.3.3" evidence="2"/>
<dbReference type="EMBL" id="CP000151">
    <property type="protein sequence ID" value="ABB09479.1"/>
    <property type="molecule type" value="Genomic_DNA"/>
</dbReference>
<dbReference type="RefSeq" id="WP_011352996.1">
    <property type="nucleotide sequence ID" value="NC_007510.1"/>
</dbReference>
<dbReference type="SMR" id="Q39DI7"/>
<dbReference type="GeneID" id="45095768"/>
<dbReference type="KEGG" id="bur:Bcep18194_A5885"/>
<dbReference type="PATRIC" id="fig|482957.22.peg.2876"/>
<dbReference type="HOGENOM" id="CLU_043846_3_2_4"/>
<dbReference type="UniPathway" id="UPA00068">
    <property type="reaction ID" value="UER00112"/>
</dbReference>
<dbReference type="Proteomes" id="UP000002705">
    <property type="component" value="Chromosome 1"/>
</dbReference>
<dbReference type="GO" id="GO:0005737">
    <property type="term" value="C:cytoplasm"/>
    <property type="evidence" value="ECO:0007669"/>
    <property type="project" value="UniProtKB-SubCell"/>
</dbReference>
<dbReference type="GO" id="GO:0016597">
    <property type="term" value="F:amino acid binding"/>
    <property type="evidence" value="ECO:0007669"/>
    <property type="project" value="InterPro"/>
</dbReference>
<dbReference type="GO" id="GO:0004585">
    <property type="term" value="F:ornithine carbamoyltransferase activity"/>
    <property type="evidence" value="ECO:0007669"/>
    <property type="project" value="UniProtKB-UniRule"/>
</dbReference>
<dbReference type="GO" id="GO:0042450">
    <property type="term" value="P:arginine biosynthetic process via ornithine"/>
    <property type="evidence" value="ECO:0007669"/>
    <property type="project" value="TreeGrafter"/>
</dbReference>
<dbReference type="GO" id="GO:0019240">
    <property type="term" value="P:citrulline biosynthetic process"/>
    <property type="evidence" value="ECO:0007669"/>
    <property type="project" value="TreeGrafter"/>
</dbReference>
<dbReference type="GO" id="GO:0006526">
    <property type="term" value="P:L-arginine biosynthetic process"/>
    <property type="evidence" value="ECO:0007669"/>
    <property type="project" value="UniProtKB-UniRule"/>
</dbReference>
<dbReference type="FunFam" id="3.40.50.1370:FF:000008">
    <property type="entry name" value="Ornithine carbamoyltransferase"/>
    <property type="match status" value="1"/>
</dbReference>
<dbReference type="Gene3D" id="3.40.50.1370">
    <property type="entry name" value="Aspartate/ornithine carbamoyltransferase"/>
    <property type="match status" value="2"/>
</dbReference>
<dbReference type="HAMAP" id="MF_01109">
    <property type="entry name" value="OTCase"/>
    <property type="match status" value="1"/>
</dbReference>
<dbReference type="InterPro" id="IPR006132">
    <property type="entry name" value="Asp/Orn_carbamoyltranf_P-bd"/>
</dbReference>
<dbReference type="InterPro" id="IPR006130">
    <property type="entry name" value="Asp/Orn_carbamoylTrfase"/>
</dbReference>
<dbReference type="InterPro" id="IPR036901">
    <property type="entry name" value="Asp/Orn_carbamoylTrfase_sf"/>
</dbReference>
<dbReference type="InterPro" id="IPR006131">
    <property type="entry name" value="Asp_carbamoyltransf_Asp/Orn-bd"/>
</dbReference>
<dbReference type="InterPro" id="IPR002292">
    <property type="entry name" value="Orn/put_carbamltrans"/>
</dbReference>
<dbReference type="InterPro" id="IPR024904">
    <property type="entry name" value="OTCase_ArgI"/>
</dbReference>
<dbReference type="NCBIfam" id="TIGR00658">
    <property type="entry name" value="orni_carb_tr"/>
    <property type="match status" value="1"/>
</dbReference>
<dbReference type="NCBIfam" id="NF001986">
    <property type="entry name" value="PRK00779.1"/>
    <property type="match status" value="1"/>
</dbReference>
<dbReference type="PANTHER" id="PTHR45753">
    <property type="entry name" value="ORNITHINE CARBAMOYLTRANSFERASE, MITOCHONDRIAL"/>
    <property type="match status" value="1"/>
</dbReference>
<dbReference type="PANTHER" id="PTHR45753:SF3">
    <property type="entry name" value="ORNITHINE TRANSCARBAMYLASE, MITOCHONDRIAL"/>
    <property type="match status" value="1"/>
</dbReference>
<dbReference type="Pfam" id="PF00185">
    <property type="entry name" value="OTCace"/>
    <property type="match status" value="1"/>
</dbReference>
<dbReference type="Pfam" id="PF02729">
    <property type="entry name" value="OTCace_N"/>
    <property type="match status" value="1"/>
</dbReference>
<dbReference type="PRINTS" id="PR00100">
    <property type="entry name" value="AOTCASE"/>
</dbReference>
<dbReference type="PRINTS" id="PR00102">
    <property type="entry name" value="OTCASE"/>
</dbReference>
<dbReference type="SUPFAM" id="SSF53671">
    <property type="entry name" value="Aspartate/ornithine carbamoyltransferase"/>
    <property type="match status" value="1"/>
</dbReference>
<dbReference type="PROSITE" id="PS00097">
    <property type="entry name" value="CARBAMOYLTRANSFERASE"/>
    <property type="match status" value="1"/>
</dbReference>
<comment type="function">
    <text evidence="1">Reversibly catalyzes the transfer of the carbamoyl group from carbamoyl phosphate (CP) to the N(epsilon) atom of ornithine (ORN) to produce L-citrulline.</text>
</comment>
<comment type="catalytic activity">
    <reaction evidence="2">
        <text>carbamoyl phosphate + L-ornithine = L-citrulline + phosphate + H(+)</text>
        <dbReference type="Rhea" id="RHEA:19513"/>
        <dbReference type="ChEBI" id="CHEBI:15378"/>
        <dbReference type="ChEBI" id="CHEBI:43474"/>
        <dbReference type="ChEBI" id="CHEBI:46911"/>
        <dbReference type="ChEBI" id="CHEBI:57743"/>
        <dbReference type="ChEBI" id="CHEBI:58228"/>
        <dbReference type="EC" id="2.1.3.3"/>
    </reaction>
</comment>
<comment type="pathway">
    <text evidence="2">Amino-acid biosynthesis; L-arginine biosynthesis; L-arginine from L-ornithine and carbamoyl phosphate: step 1/3.</text>
</comment>
<comment type="subcellular location">
    <subcellularLocation>
        <location evidence="2">Cytoplasm</location>
    </subcellularLocation>
</comment>
<comment type="similarity">
    <text evidence="2">Belongs to the aspartate/ornithine carbamoyltransferase superfamily. OTCase family.</text>
</comment>
<accession>Q39DI7</accession>
<proteinExistence type="inferred from homology"/>
<organism>
    <name type="scientific">Burkholderia lata (strain ATCC 17760 / DSM 23089 / LMG 22485 / NCIMB 9086 / R18194 / 383)</name>
    <dbReference type="NCBI Taxonomy" id="482957"/>
    <lineage>
        <taxon>Bacteria</taxon>
        <taxon>Pseudomonadati</taxon>
        <taxon>Pseudomonadota</taxon>
        <taxon>Betaproteobacteria</taxon>
        <taxon>Burkholderiales</taxon>
        <taxon>Burkholderiaceae</taxon>
        <taxon>Burkholderia</taxon>
        <taxon>Burkholderia cepacia complex</taxon>
    </lineage>
</organism>